<accession>O74225</accession>
<accession>Q7RVE6</accession>
<accession>V5IPJ6</accession>
<proteinExistence type="evidence at protein level"/>
<name>HSP88_NEUCR</name>
<dbReference type="EMBL" id="AF069523">
    <property type="protein sequence ID" value="AAC23862.1"/>
    <property type="molecule type" value="mRNA"/>
</dbReference>
<dbReference type="EMBL" id="CM002239">
    <property type="protein sequence ID" value="ESA43073.1"/>
    <property type="molecule type" value="Genomic_DNA"/>
</dbReference>
<dbReference type="EMBL" id="CM002239">
    <property type="protein sequence ID" value="ESA43074.1"/>
    <property type="molecule type" value="Genomic_DNA"/>
</dbReference>
<dbReference type="RefSeq" id="XP_011394150.1">
    <property type="nucleotide sequence ID" value="XM_011395848.1"/>
</dbReference>
<dbReference type="RefSeq" id="XP_011394151.1">
    <property type="nucleotide sequence ID" value="XM_011395849.1"/>
</dbReference>
<dbReference type="SMR" id="O74225"/>
<dbReference type="FunCoup" id="O74225">
    <property type="interactions" value="1398"/>
</dbReference>
<dbReference type="STRING" id="367110.O74225"/>
<dbReference type="PaxDb" id="5141-EFNCRP00000005028"/>
<dbReference type="EnsemblFungi" id="ESA43073">
    <property type="protein sequence ID" value="ESA43073"/>
    <property type="gene ID" value="NCU05269"/>
</dbReference>
<dbReference type="EnsemblFungi" id="ESA43074">
    <property type="protein sequence ID" value="ESA43074"/>
    <property type="gene ID" value="NCU05269"/>
</dbReference>
<dbReference type="GeneID" id="3877907"/>
<dbReference type="KEGG" id="ncr:NCU05269"/>
<dbReference type="VEuPathDB" id="FungiDB:NCU05269"/>
<dbReference type="HOGENOM" id="CLU_005965_5_1_1"/>
<dbReference type="InParanoid" id="O74225"/>
<dbReference type="OrthoDB" id="434160at2759"/>
<dbReference type="Proteomes" id="UP000001805">
    <property type="component" value="Chromosome 4, Linkage Group IV"/>
</dbReference>
<dbReference type="GO" id="GO:0005829">
    <property type="term" value="C:cytosol"/>
    <property type="evidence" value="ECO:0000318"/>
    <property type="project" value="GO_Central"/>
</dbReference>
<dbReference type="GO" id="GO:0005634">
    <property type="term" value="C:nucleus"/>
    <property type="evidence" value="ECO:0000318"/>
    <property type="project" value="GO_Central"/>
</dbReference>
<dbReference type="GO" id="GO:0000774">
    <property type="term" value="F:adenyl-nucleotide exchange factor activity"/>
    <property type="evidence" value="ECO:0000318"/>
    <property type="project" value="GO_Central"/>
</dbReference>
<dbReference type="GO" id="GO:0005524">
    <property type="term" value="F:ATP binding"/>
    <property type="evidence" value="ECO:0007669"/>
    <property type="project" value="UniProtKB-KW"/>
</dbReference>
<dbReference type="GO" id="GO:0140662">
    <property type="term" value="F:ATP-dependent protein folding chaperone"/>
    <property type="evidence" value="ECO:0007669"/>
    <property type="project" value="InterPro"/>
</dbReference>
<dbReference type="GO" id="GO:0006457">
    <property type="term" value="P:protein folding"/>
    <property type="evidence" value="ECO:0000318"/>
    <property type="project" value="GO_Central"/>
</dbReference>
<dbReference type="CDD" id="cd24094">
    <property type="entry name" value="ASKHA_NBD_HSP70_ScSse"/>
    <property type="match status" value="1"/>
</dbReference>
<dbReference type="FunFam" id="1.20.1270.10:FF:000002">
    <property type="entry name" value="Heat shock 70 kDa protein 4"/>
    <property type="match status" value="1"/>
</dbReference>
<dbReference type="FunFam" id="3.30.30.30:FF:000002">
    <property type="entry name" value="Heat shock 70 kDa protein 4"/>
    <property type="match status" value="1"/>
</dbReference>
<dbReference type="FunFam" id="3.30.420.40:FF:000171">
    <property type="entry name" value="Heat shock 70 kDa protein 4"/>
    <property type="match status" value="2"/>
</dbReference>
<dbReference type="FunFam" id="3.90.640.10:FF:000004">
    <property type="entry name" value="Heat shock 70 kDa protein 4"/>
    <property type="match status" value="1"/>
</dbReference>
<dbReference type="FunFam" id="2.60.34.10:FF:000011">
    <property type="entry name" value="Heat shock protein hsp88"/>
    <property type="match status" value="1"/>
</dbReference>
<dbReference type="Gene3D" id="1.20.1270.10">
    <property type="match status" value="1"/>
</dbReference>
<dbReference type="Gene3D" id="3.30.30.30">
    <property type="match status" value="1"/>
</dbReference>
<dbReference type="Gene3D" id="3.30.420.40">
    <property type="match status" value="2"/>
</dbReference>
<dbReference type="Gene3D" id="3.90.640.10">
    <property type="entry name" value="Actin, Chain A, domain 4"/>
    <property type="match status" value="1"/>
</dbReference>
<dbReference type="Gene3D" id="2.60.34.10">
    <property type="entry name" value="Substrate Binding Domain Of DNAk, Chain A, domain 1"/>
    <property type="match status" value="1"/>
</dbReference>
<dbReference type="InterPro" id="IPR043129">
    <property type="entry name" value="ATPase_NBD"/>
</dbReference>
<dbReference type="InterPro" id="IPR018181">
    <property type="entry name" value="Heat_shock_70_CS"/>
</dbReference>
<dbReference type="InterPro" id="IPR029048">
    <property type="entry name" value="HSP70_C_sf"/>
</dbReference>
<dbReference type="InterPro" id="IPR029047">
    <property type="entry name" value="HSP70_peptide-bd_sf"/>
</dbReference>
<dbReference type="InterPro" id="IPR013126">
    <property type="entry name" value="Hsp_70_fam"/>
</dbReference>
<dbReference type="PANTHER" id="PTHR45639:SF4">
    <property type="entry name" value="HSC70CB, ISOFORM G"/>
    <property type="match status" value="1"/>
</dbReference>
<dbReference type="PANTHER" id="PTHR45639">
    <property type="entry name" value="HSC70CB, ISOFORM G-RELATED"/>
    <property type="match status" value="1"/>
</dbReference>
<dbReference type="Pfam" id="PF00012">
    <property type="entry name" value="HSP70"/>
    <property type="match status" value="1"/>
</dbReference>
<dbReference type="PRINTS" id="PR00301">
    <property type="entry name" value="HEATSHOCK70"/>
</dbReference>
<dbReference type="SUPFAM" id="SSF53067">
    <property type="entry name" value="Actin-like ATPase domain"/>
    <property type="match status" value="2"/>
</dbReference>
<dbReference type="SUPFAM" id="SSF100934">
    <property type="entry name" value="Heat shock protein 70kD (HSP70), C-terminal subdomain"/>
    <property type="match status" value="1"/>
</dbReference>
<dbReference type="SUPFAM" id="SSF100920">
    <property type="entry name" value="Heat shock protein 70kD (HSP70), peptide-binding domain"/>
    <property type="match status" value="1"/>
</dbReference>
<dbReference type="PROSITE" id="PS01036">
    <property type="entry name" value="HSP70_3"/>
    <property type="match status" value="1"/>
</dbReference>
<reference key="1">
    <citation type="journal article" date="1998" name="J. Biol. Chem.">
        <title>Characterization of an 88-kDa heat shock protein of Neurospora crassa that interacts with Hsp30.</title>
        <authorList>
            <person name="Plesofsky-Vig N."/>
            <person name="Brambl R."/>
        </authorList>
    </citation>
    <scope>NUCLEOTIDE SEQUENCE [MRNA]</scope>
    <scope>PROTEIN SEQUENCE OF 431-436; 439-445; 536-549; 575-586; 596-602 AND 689-697</scope>
    <scope>CHARACTERIZATION</scope>
</reference>
<reference key="2">
    <citation type="journal article" date="2003" name="Nature">
        <title>The genome sequence of the filamentous fungus Neurospora crassa.</title>
        <authorList>
            <person name="Galagan J.E."/>
            <person name="Calvo S.E."/>
            <person name="Borkovich K.A."/>
            <person name="Selker E.U."/>
            <person name="Read N.D."/>
            <person name="Jaffe D.B."/>
            <person name="FitzHugh W."/>
            <person name="Ma L.-J."/>
            <person name="Smirnov S."/>
            <person name="Purcell S."/>
            <person name="Rehman B."/>
            <person name="Elkins T."/>
            <person name="Engels R."/>
            <person name="Wang S."/>
            <person name="Nielsen C.B."/>
            <person name="Butler J."/>
            <person name="Endrizzi M."/>
            <person name="Qui D."/>
            <person name="Ianakiev P."/>
            <person name="Bell-Pedersen D."/>
            <person name="Nelson M.A."/>
            <person name="Werner-Washburne M."/>
            <person name="Selitrennikoff C.P."/>
            <person name="Kinsey J.A."/>
            <person name="Braun E.L."/>
            <person name="Zelter A."/>
            <person name="Schulte U."/>
            <person name="Kothe G.O."/>
            <person name="Jedd G."/>
            <person name="Mewes H.-W."/>
            <person name="Staben C."/>
            <person name="Marcotte E."/>
            <person name="Greenberg D."/>
            <person name="Roy A."/>
            <person name="Foley K."/>
            <person name="Naylor J."/>
            <person name="Stange-Thomann N."/>
            <person name="Barrett R."/>
            <person name="Gnerre S."/>
            <person name="Kamal M."/>
            <person name="Kamvysselis M."/>
            <person name="Mauceli E.W."/>
            <person name="Bielke C."/>
            <person name="Rudd S."/>
            <person name="Frishman D."/>
            <person name="Krystofova S."/>
            <person name="Rasmussen C."/>
            <person name="Metzenberg R.L."/>
            <person name="Perkins D.D."/>
            <person name="Kroken S."/>
            <person name="Cogoni C."/>
            <person name="Macino G."/>
            <person name="Catcheside D.E.A."/>
            <person name="Li W."/>
            <person name="Pratt R.J."/>
            <person name="Osmani S.A."/>
            <person name="DeSouza C.P.C."/>
            <person name="Glass N.L."/>
            <person name="Orbach M.J."/>
            <person name="Berglund J.A."/>
            <person name="Voelker R."/>
            <person name="Yarden O."/>
            <person name="Plamann M."/>
            <person name="Seiler S."/>
            <person name="Dunlap J.C."/>
            <person name="Radford A."/>
            <person name="Aramayo R."/>
            <person name="Natvig D.O."/>
            <person name="Alex L.A."/>
            <person name="Mannhaupt G."/>
            <person name="Ebbole D.J."/>
            <person name="Freitag M."/>
            <person name="Paulsen I."/>
            <person name="Sachs M.S."/>
            <person name="Lander E.S."/>
            <person name="Nusbaum C."/>
            <person name="Birren B.W."/>
        </authorList>
    </citation>
    <scope>NUCLEOTIDE SEQUENCE [LARGE SCALE GENOMIC DNA]</scope>
    <source>
        <strain>ATCC 24698 / 74-OR23-1A / CBS 708.71 / DSM 1257 / FGSC 987</strain>
    </source>
</reference>
<gene>
    <name type="primary">hsp88</name>
    <name type="ORF">NCU05269</name>
</gene>
<evidence type="ECO:0000256" key="1">
    <source>
        <dbReference type="SAM" id="MobiDB-lite"/>
    </source>
</evidence>
<evidence type="ECO:0000305" key="2"/>
<feature type="chain" id="PRO_0000078373" description="Heat shock protein hsp88">
    <location>
        <begin position="1"/>
        <end position="707"/>
    </location>
</feature>
<feature type="region of interest" description="Disordered" evidence="1">
    <location>
        <begin position="662"/>
        <end position="707"/>
    </location>
</feature>
<feature type="compositionally biased region" description="Basic and acidic residues" evidence="1">
    <location>
        <begin position="662"/>
        <end position="692"/>
    </location>
</feature>
<protein>
    <recommendedName>
        <fullName>Heat shock protein hsp88</fullName>
    </recommendedName>
</protein>
<organism>
    <name type="scientific">Neurospora crassa (strain ATCC 24698 / 74-OR23-1A / CBS 708.71 / DSM 1257 / FGSC 987)</name>
    <dbReference type="NCBI Taxonomy" id="367110"/>
    <lineage>
        <taxon>Eukaryota</taxon>
        <taxon>Fungi</taxon>
        <taxon>Dikarya</taxon>
        <taxon>Ascomycota</taxon>
        <taxon>Pezizomycotina</taxon>
        <taxon>Sordariomycetes</taxon>
        <taxon>Sordariomycetidae</taxon>
        <taxon>Sordariales</taxon>
        <taxon>Sordariaceae</taxon>
        <taxon>Neurospora</taxon>
    </lineage>
</organism>
<sequence>MSVVGVDFGALNTVIAVARNRGVDVITNEVSNRATPSLVGFGPKSRYIGEPAKTQEISNLKNTVGCLKRLAGRTLDDPDVAIEQQFISATLVDVNGEVGAEVTYLGEKRKFSATELIAMFMSKIKQTTQAEVKVAVQELVLSVPAWFTDKQRRSILDAAEIAGLRPLRLINDTTAAALGWGITKLDLPGPEEKPRRVAFVDVGYSNYTCSIVEFKKGELSVKSTACDRHFGGRNFDKALLDHLHKEFLGKYKIDIFTNPKAVCRVLAAAEKLKKILSANQQAPLNIESLMNDIDVRAMITRQEFEAMVEPLLAKVHVPLEQALADAKLTKDDIDIIEVVGGGSRVPSVKERIQAFFGKQLSFTMNQDEAIARGCAFSCAILSPVFKVRDFQVQDIINYPIEFTWEKDADIPDEDTSLVVFNKGNVLPSTKILTFYRKQPFDLEARYTNPEELPGKTSPFIGRFSIKGVHATEGPEDFMICKLKARINIHGILNVESAYYVEDQEVEEEVKDENGDVVMEGDKPKTRKVKKQVRKGELPVVSATPSLDPAAKNAAIEREQAMIMEDKLVADTEEKKNELETYIYDLRNKLDDQYADLASEEEKEKIRAKLMEVEDWLYDEGDDATKAVYVAKIEEIRALAGPVVQRYFDKVEAERQALQEKLEAEKAAKKAEEEARKAKEAAEKAAQEGAKDDEMTDADAPKPVVEEA</sequence>
<comment type="subunit">
    <text>Binds hsp30 independent of temperature or substrate.</text>
</comment>
<comment type="subcellular location">
    <subcellularLocation>
        <location>Cytoplasm</location>
    </subcellularLocation>
</comment>
<comment type="induction">
    <text>By heat shock.</text>
</comment>
<comment type="PTM">
    <text>The N-terminus is blocked.</text>
</comment>
<comment type="similarity">
    <text evidence="2">Belongs to the heat shock protein 70 family.</text>
</comment>
<keyword id="KW-0067">ATP-binding</keyword>
<keyword id="KW-0963">Cytoplasm</keyword>
<keyword id="KW-0903">Direct protein sequencing</keyword>
<keyword id="KW-0547">Nucleotide-binding</keyword>
<keyword id="KW-1185">Reference proteome</keyword>
<keyword id="KW-0346">Stress response</keyword>